<protein>
    <recommendedName>
        <fullName>U3-ctenitoxin-Pk1a</fullName>
        <shortName>U3-CNTX-Pk1a</shortName>
    </recommendedName>
    <alternativeName>
        <fullName evidence="4">Neurotoxin PKTx21C2</fullName>
    </alternativeName>
    <component>
        <recommendedName>
            <fullName evidence="5">Neurotoxin PKTx21C2 variant Ala-1 Del</fullName>
        </recommendedName>
    </component>
</protein>
<dbReference type="SMR" id="P83915"/>
<dbReference type="ArachnoServer" id="AS000233">
    <property type="toxin name" value="U3-ctenitoxin-Pk1a"/>
</dbReference>
<dbReference type="GO" id="GO:0005576">
    <property type="term" value="C:extracellular region"/>
    <property type="evidence" value="ECO:0007669"/>
    <property type="project" value="UniProtKB-SubCell"/>
</dbReference>
<dbReference type="GO" id="GO:0090729">
    <property type="term" value="F:toxin activity"/>
    <property type="evidence" value="ECO:0007669"/>
    <property type="project" value="UniProtKB-KW"/>
</dbReference>
<dbReference type="InterPro" id="IPR012634">
    <property type="entry name" value="Toxin_29"/>
</dbReference>
<dbReference type="Pfam" id="PF08116">
    <property type="entry name" value="Toxin_29"/>
    <property type="match status" value="1"/>
</dbReference>
<keyword id="KW-0903">Direct protein sequencing</keyword>
<keyword id="KW-1015">Disulfide bond</keyword>
<keyword id="KW-0960">Knottin</keyword>
<keyword id="KW-0528">Neurotoxin</keyword>
<keyword id="KW-0964">Secreted</keyword>
<keyword id="KW-0800">Toxin</keyword>
<reference key="1">
    <citation type="journal article" date="2006" name="Comp. Biochem. Physiol.">
        <title>Comparison of the partial proteomes of the venoms of Brazilian spiders of the genus Phoneutria.</title>
        <authorList>
            <person name="Richardson M."/>
            <person name="Pimenta A.M."/>
            <person name="Bemquerer M.P."/>
            <person name="Santoro M.M."/>
            <person name="Beirao P.S."/>
            <person name="Lima M.E."/>
            <person name="Figueiredo S.G."/>
            <person name="Bloch C. Jr."/>
            <person name="Vasconcelos E.A."/>
            <person name="Campos F.A."/>
            <person name="Gomes P.C."/>
            <person name="Cordeiro M.N."/>
        </authorList>
    </citation>
    <scope>PROTEIN SEQUENCE</scope>
    <scope>SUBCELLULAR LOCATION</scope>
    <scope>MASS SPECTROMETRY</scope>
    <source>
        <tissue>Venom</tissue>
    </source>
</reference>
<reference key="2">
    <citation type="submission" date="2004-04" db="UniProtKB">
        <title>Neurotoxin PKTx21C2 from venom of Brazilian wandering spider Phoneutria keyserling.</title>
        <authorList>
            <person name="Richardson M."/>
            <person name="Pimenta A.M.C."/>
            <person name="Bemquerer M.P."/>
            <person name="Santoro M.M."/>
            <person name="Figueiredo S.G."/>
            <person name="Cordeiro M.N."/>
        </authorList>
    </citation>
    <scope>PROTEIN SEQUENCE</scope>
    <scope>MASS SPECTROMETRY</scope>
    <scope>VARIANT ALA-1 DEL</scope>
    <scope>SUBCELLULAR LOCATION</scope>
    <source>
        <tissue>Venom</tissue>
    </source>
</reference>
<feature type="peptide" id="PRO_0000044971" description="U3-ctenitoxin-Pk1a" evidence="2">
    <location>
        <begin position="1"/>
        <end position="32"/>
    </location>
</feature>
<feature type="peptide" id="PRO_0000447872" description="Neurotoxin PKTx21C2 variant Ala-1 Del" evidence="3">
    <location>
        <begin position="2"/>
        <end position="32"/>
    </location>
</feature>
<feature type="disulfide bond" evidence="1">
    <location>
        <begin position="3"/>
        <end position="17"/>
    </location>
</feature>
<feature type="disulfide bond" evidence="1">
    <location>
        <begin position="10"/>
        <end position="21"/>
    </location>
</feature>
<feature type="disulfide bond" evidence="1">
    <location>
        <begin position="16"/>
        <end position="30"/>
    </location>
</feature>
<sequence>AFCKYNGEQCTSDGQCCNGRCRTAFMGKICMG</sequence>
<organism>
    <name type="scientific">Phoneutria keyserlingi</name>
    <name type="common">Brazilian wandering spider</name>
    <name type="synonym">Ctenus keyserlingii</name>
    <dbReference type="NCBI Taxonomy" id="272754"/>
    <lineage>
        <taxon>Eukaryota</taxon>
        <taxon>Metazoa</taxon>
        <taxon>Ecdysozoa</taxon>
        <taxon>Arthropoda</taxon>
        <taxon>Chelicerata</taxon>
        <taxon>Arachnida</taxon>
        <taxon>Araneae</taxon>
        <taxon>Araneomorphae</taxon>
        <taxon>Entelegynae</taxon>
        <taxon>Lycosoidea</taxon>
        <taxon>Ctenidae</taxon>
        <taxon>Phoneutria</taxon>
    </lineage>
</organism>
<proteinExistence type="evidence at protein level"/>
<accession>P83915</accession>
<evidence type="ECO:0000250" key="1"/>
<evidence type="ECO:0000269" key="2">
    <source>
    </source>
</evidence>
<evidence type="ECO:0000269" key="3">
    <source ref="2"/>
</evidence>
<evidence type="ECO:0000303" key="4">
    <source>
    </source>
</evidence>
<evidence type="ECO:0000303" key="5">
    <source ref="2"/>
</evidence>
<evidence type="ECO:0000305" key="6"/>
<evidence type="ECO:0000305" key="7">
    <source>
    </source>
</evidence>
<evidence type="ECO:0000305" key="8">
    <source ref="2"/>
</evidence>
<name>TX21_PHOKE</name>
<comment type="function">
    <text evidence="6">May act as a neurotoxin.</text>
</comment>
<comment type="subcellular location">
    <subcellularLocation>
        <location evidence="7 8">Secreted</location>
    </subcellularLocation>
</comment>
<comment type="tissue specificity">
    <text evidence="7 8">Expressed by the venom gland.</text>
</comment>
<comment type="domain">
    <text evidence="1">The presence of a 'disulfide through disulfide knot' structurally defines this protein as a knottin.</text>
</comment>
<comment type="mass spectrometry">
    <molecule>U3-ctenitoxin-Pk1a</molecule>
</comment>
<comment type="mass spectrometry">
    <molecule>Neurotoxin PKTx21C2 variant Ala-1 Del</molecule>
</comment>
<comment type="similarity">
    <text evidence="6">Belongs to the neurotoxin 17 (21C2) family.</text>
</comment>